<accession>B7LAJ5</accession>
<keyword id="KW-1185">Reference proteome</keyword>
<protein>
    <recommendedName>
        <fullName evidence="1">Elongation factor P-like protein</fullName>
    </recommendedName>
</protein>
<evidence type="ECO:0000255" key="1">
    <source>
        <dbReference type="HAMAP-Rule" id="MF_00646"/>
    </source>
</evidence>
<evidence type="ECO:0000305" key="2"/>
<proteinExistence type="inferred from homology"/>
<gene>
    <name evidence="1" type="primary">yeiP</name>
    <name type="ordered locus">EC55989_2425</name>
</gene>
<sequence length="190" mass="21533">MPRANEIKKGMVLNYNGKLLLVKDIDIQSPTARGAATLYKMRFSDVRTGLKVEERFKGDDIVDTVTLTRRYVDFSYVDGNEYVFMDKEDYTPYTFTKDQIEEELLFMPEGGMPDMQVLTWDGQLLALELPQTVDLEIVETAPGIKGASASARNKPATLSTGLVIQVPEYLSPGEKIRIHIEERRYMGRAD</sequence>
<dbReference type="EMBL" id="CU928145">
    <property type="protein sequence ID" value="CAU98295.1"/>
    <property type="status" value="ALT_INIT"/>
    <property type="molecule type" value="Genomic_DNA"/>
</dbReference>
<dbReference type="RefSeq" id="WP_001136827.1">
    <property type="nucleotide sequence ID" value="NZ_CP028304.1"/>
</dbReference>
<dbReference type="SMR" id="B7LAJ5"/>
<dbReference type="GeneID" id="93775010"/>
<dbReference type="KEGG" id="eck:EC55989_2425"/>
<dbReference type="HOGENOM" id="CLU_074944_2_0_6"/>
<dbReference type="Proteomes" id="UP000000746">
    <property type="component" value="Chromosome"/>
</dbReference>
<dbReference type="GO" id="GO:0005829">
    <property type="term" value="C:cytosol"/>
    <property type="evidence" value="ECO:0007669"/>
    <property type="project" value="UniProtKB-ARBA"/>
</dbReference>
<dbReference type="GO" id="GO:0003746">
    <property type="term" value="F:translation elongation factor activity"/>
    <property type="evidence" value="ECO:0007669"/>
    <property type="project" value="UniProtKB-UniRule"/>
</dbReference>
<dbReference type="GO" id="GO:0043043">
    <property type="term" value="P:peptide biosynthetic process"/>
    <property type="evidence" value="ECO:0007669"/>
    <property type="project" value="InterPro"/>
</dbReference>
<dbReference type="CDD" id="cd04470">
    <property type="entry name" value="S1_EF-P_repeat_1"/>
    <property type="match status" value="1"/>
</dbReference>
<dbReference type="CDD" id="cd05794">
    <property type="entry name" value="S1_EF-P_repeat_2"/>
    <property type="match status" value="1"/>
</dbReference>
<dbReference type="FunFam" id="2.40.50.140:FF:000004">
    <property type="entry name" value="Elongation factor P"/>
    <property type="match status" value="1"/>
</dbReference>
<dbReference type="FunFam" id="2.30.30.30:FF:000011">
    <property type="entry name" value="Elongation factor P-like protein"/>
    <property type="match status" value="1"/>
</dbReference>
<dbReference type="FunFam" id="2.40.50.140:FF:000053">
    <property type="entry name" value="Elongation factor P-like protein"/>
    <property type="match status" value="1"/>
</dbReference>
<dbReference type="Gene3D" id="2.30.30.30">
    <property type="match status" value="1"/>
</dbReference>
<dbReference type="Gene3D" id="2.40.50.140">
    <property type="entry name" value="Nucleic acid-binding proteins"/>
    <property type="match status" value="2"/>
</dbReference>
<dbReference type="HAMAP" id="MF_00646">
    <property type="entry name" value="EFP"/>
    <property type="match status" value="1"/>
</dbReference>
<dbReference type="InterPro" id="IPR015365">
    <property type="entry name" value="Elong-fact-P_C"/>
</dbReference>
<dbReference type="InterPro" id="IPR012340">
    <property type="entry name" value="NA-bd_OB-fold"/>
</dbReference>
<dbReference type="InterPro" id="IPR014722">
    <property type="entry name" value="Rib_uL2_dom2"/>
</dbReference>
<dbReference type="InterPro" id="IPR020599">
    <property type="entry name" value="Transl_elong_fac_P/YeiP"/>
</dbReference>
<dbReference type="InterPro" id="IPR013185">
    <property type="entry name" value="Transl_elong_KOW-like"/>
</dbReference>
<dbReference type="InterPro" id="IPR011897">
    <property type="entry name" value="Transl_elong_p-like_YeiP"/>
</dbReference>
<dbReference type="InterPro" id="IPR001059">
    <property type="entry name" value="Transl_elong_P/YeiP_cen"/>
</dbReference>
<dbReference type="InterPro" id="IPR013852">
    <property type="entry name" value="Transl_elong_P/YeiP_CS"/>
</dbReference>
<dbReference type="InterPro" id="IPR008991">
    <property type="entry name" value="Translation_prot_SH3-like_sf"/>
</dbReference>
<dbReference type="NCBIfam" id="NF001810">
    <property type="entry name" value="PRK00529.1"/>
    <property type="match status" value="1"/>
</dbReference>
<dbReference type="NCBIfam" id="NF003392">
    <property type="entry name" value="PRK04542.1"/>
    <property type="match status" value="1"/>
</dbReference>
<dbReference type="NCBIfam" id="TIGR02178">
    <property type="entry name" value="yeiP"/>
    <property type="match status" value="1"/>
</dbReference>
<dbReference type="PANTHER" id="PTHR30053">
    <property type="entry name" value="ELONGATION FACTOR P"/>
    <property type="match status" value="1"/>
</dbReference>
<dbReference type="PANTHER" id="PTHR30053:SF14">
    <property type="entry name" value="TRANSLATION ELONGATION FACTOR KOW-LIKE DOMAIN-CONTAINING PROTEIN"/>
    <property type="match status" value="1"/>
</dbReference>
<dbReference type="Pfam" id="PF01132">
    <property type="entry name" value="EFP"/>
    <property type="match status" value="1"/>
</dbReference>
<dbReference type="Pfam" id="PF08207">
    <property type="entry name" value="EFP_N"/>
    <property type="match status" value="1"/>
</dbReference>
<dbReference type="Pfam" id="PF09285">
    <property type="entry name" value="Elong-fact-P_C"/>
    <property type="match status" value="1"/>
</dbReference>
<dbReference type="PIRSF" id="PIRSF005901">
    <property type="entry name" value="EF-P"/>
    <property type="match status" value="1"/>
</dbReference>
<dbReference type="SMART" id="SM01185">
    <property type="entry name" value="EFP"/>
    <property type="match status" value="1"/>
</dbReference>
<dbReference type="SMART" id="SM00841">
    <property type="entry name" value="Elong-fact-P_C"/>
    <property type="match status" value="1"/>
</dbReference>
<dbReference type="SUPFAM" id="SSF50249">
    <property type="entry name" value="Nucleic acid-binding proteins"/>
    <property type="match status" value="2"/>
</dbReference>
<dbReference type="SUPFAM" id="SSF50104">
    <property type="entry name" value="Translation proteins SH3-like domain"/>
    <property type="match status" value="1"/>
</dbReference>
<dbReference type="PROSITE" id="PS01275">
    <property type="entry name" value="EFP"/>
    <property type="match status" value="1"/>
</dbReference>
<reference key="1">
    <citation type="journal article" date="2009" name="PLoS Genet.">
        <title>Organised genome dynamics in the Escherichia coli species results in highly diverse adaptive paths.</title>
        <authorList>
            <person name="Touchon M."/>
            <person name="Hoede C."/>
            <person name="Tenaillon O."/>
            <person name="Barbe V."/>
            <person name="Baeriswyl S."/>
            <person name="Bidet P."/>
            <person name="Bingen E."/>
            <person name="Bonacorsi S."/>
            <person name="Bouchier C."/>
            <person name="Bouvet O."/>
            <person name="Calteau A."/>
            <person name="Chiapello H."/>
            <person name="Clermont O."/>
            <person name="Cruveiller S."/>
            <person name="Danchin A."/>
            <person name="Diard M."/>
            <person name="Dossat C."/>
            <person name="Karoui M.E."/>
            <person name="Frapy E."/>
            <person name="Garry L."/>
            <person name="Ghigo J.M."/>
            <person name="Gilles A.M."/>
            <person name="Johnson J."/>
            <person name="Le Bouguenec C."/>
            <person name="Lescat M."/>
            <person name="Mangenot S."/>
            <person name="Martinez-Jehanne V."/>
            <person name="Matic I."/>
            <person name="Nassif X."/>
            <person name="Oztas S."/>
            <person name="Petit M.A."/>
            <person name="Pichon C."/>
            <person name="Rouy Z."/>
            <person name="Ruf C.S."/>
            <person name="Schneider D."/>
            <person name="Tourret J."/>
            <person name="Vacherie B."/>
            <person name="Vallenet D."/>
            <person name="Medigue C."/>
            <person name="Rocha E.P.C."/>
            <person name="Denamur E."/>
        </authorList>
    </citation>
    <scope>NUCLEOTIDE SEQUENCE [LARGE SCALE GENOMIC DNA]</scope>
    <source>
        <strain>55989 / EAEC</strain>
    </source>
</reference>
<organism>
    <name type="scientific">Escherichia coli (strain 55989 / EAEC)</name>
    <dbReference type="NCBI Taxonomy" id="585055"/>
    <lineage>
        <taxon>Bacteria</taxon>
        <taxon>Pseudomonadati</taxon>
        <taxon>Pseudomonadota</taxon>
        <taxon>Gammaproteobacteria</taxon>
        <taxon>Enterobacterales</taxon>
        <taxon>Enterobacteriaceae</taxon>
        <taxon>Escherichia</taxon>
    </lineage>
</organism>
<name>EFPL_ECO55</name>
<comment type="similarity">
    <text evidence="1">Belongs to the elongation factor P family.</text>
</comment>
<comment type="sequence caution" evidence="2">
    <conflict type="erroneous initiation">
        <sequence resource="EMBL-CDS" id="CAU98295"/>
    </conflict>
</comment>
<feature type="chain" id="PRO_0000384909" description="Elongation factor P-like protein">
    <location>
        <begin position="1"/>
        <end position="190"/>
    </location>
</feature>